<protein>
    <recommendedName>
        <fullName>Homeobox protein Hox-A9a</fullName>
        <shortName>HoxA-9</shortName>
    </recommendedName>
</protein>
<evidence type="ECO:0000250" key="1"/>
<evidence type="ECO:0000255" key="2">
    <source>
        <dbReference type="PROSITE-ProRule" id="PRU00108"/>
    </source>
</evidence>
<evidence type="ECO:0000256" key="3">
    <source>
        <dbReference type="SAM" id="MobiDB-lite"/>
    </source>
</evidence>
<evidence type="ECO:0000305" key="4"/>
<gene>
    <name type="primary">hoxa9a</name>
    <name type="synonym">hoxa9</name>
</gene>
<dbReference type="EMBL" id="U92573">
    <property type="protein sequence ID" value="AAB68684.1"/>
    <property type="molecule type" value="Genomic_DNA"/>
</dbReference>
<dbReference type="EMBL" id="DQ481663">
    <property type="protein sequence ID" value="ABF22379.1"/>
    <property type="molecule type" value="Genomic_DNA"/>
</dbReference>
<dbReference type="SMR" id="O42506"/>
<dbReference type="FunCoup" id="O42506">
    <property type="interactions" value="2"/>
</dbReference>
<dbReference type="STRING" id="31033.ENSTRUP00000040839"/>
<dbReference type="eggNOG" id="KOG0487">
    <property type="taxonomic scope" value="Eukaryota"/>
</dbReference>
<dbReference type="HOGENOM" id="CLU_071854_0_0_1"/>
<dbReference type="InParanoid" id="O42506"/>
<dbReference type="TreeFam" id="TF317819"/>
<dbReference type="Proteomes" id="UP000005226">
    <property type="component" value="Unplaced"/>
</dbReference>
<dbReference type="GO" id="GO:0005634">
    <property type="term" value="C:nucleus"/>
    <property type="evidence" value="ECO:0007669"/>
    <property type="project" value="UniProtKB-SubCell"/>
</dbReference>
<dbReference type="GO" id="GO:0000981">
    <property type="term" value="F:DNA-binding transcription factor activity, RNA polymerase II-specific"/>
    <property type="evidence" value="ECO:0007669"/>
    <property type="project" value="InterPro"/>
</dbReference>
<dbReference type="GO" id="GO:0000978">
    <property type="term" value="F:RNA polymerase II cis-regulatory region sequence-specific DNA binding"/>
    <property type="evidence" value="ECO:0007669"/>
    <property type="project" value="TreeGrafter"/>
</dbReference>
<dbReference type="GO" id="GO:0009952">
    <property type="term" value="P:anterior/posterior pattern specification"/>
    <property type="evidence" value="ECO:0007669"/>
    <property type="project" value="TreeGrafter"/>
</dbReference>
<dbReference type="GO" id="GO:0006351">
    <property type="term" value="P:DNA-templated transcription"/>
    <property type="evidence" value="ECO:0007669"/>
    <property type="project" value="InterPro"/>
</dbReference>
<dbReference type="GO" id="GO:0048704">
    <property type="term" value="P:embryonic skeletal system morphogenesis"/>
    <property type="evidence" value="ECO:0007669"/>
    <property type="project" value="TreeGrafter"/>
</dbReference>
<dbReference type="GO" id="GO:0009954">
    <property type="term" value="P:proximal/distal pattern formation"/>
    <property type="evidence" value="ECO:0007669"/>
    <property type="project" value="TreeGrafter"/>
</dbReference>
<dbReference type="CDD" id="cd00086">
    <property type="entry name" value="homeodomain"/>
    <property type="match status" value="1"/>
</dbReference>
<dbReference type="Gene3D" id="1.10.10.60">
    <property type="entry name" value="Homeodomain-like"/>
    <property type="match status" value="1"/>
</dbReference>
<dbReference type="InterPro" id="IPR050803">
    <property type="entry name" value="Abd-B_homeobox_TF"/>
</dbReference>
<dbReference type="InterPro" id="IPR001356">
    <property type="entry name" value="HD"/>
</dbReference>
<dbReference type="InterPro" id="IPR020479">
    <property type="entry name" value="HD_metazoa"/>
</dbReference>
<dbReference type="InterPro" id="IPR017970">
    <property type="entry name" value="Homeobox_CS"/>
</dbReference>
<dbReference type="InterPro" id="IPR009057">
    <property type="entry name" value="Homeodomain-like_sf"/>
</dbReference>
<dbReference type="InterPro" id="IPR006711">
    <property type="entry name" value="Hox9_activation_N"/>
</dbReference>
<dbReference type="InterPro" id="IPR017112">
    <property type="entry name" value="HXA9/HXB9/HXC9"/>
</dbReference>
<dbReference type="PANTHER" id="PTHR45970">
    <property type="entry name" value="AGAP004664-PA"/>
    <property type="match status" value="1"/>
</dbReference>
<dbReference type="PANTHER" id="PTHR45970:SF3">
    <property type="entry name" value="HOMEOBOX PROTEIN HOX-A9"/>
    <property type="match status" value="1"/>
</dbReference>
<dbReference type="Pfam" id="PF00046">
    <property type="entry name" value="Homeodomain"/>
    <property type="match status" value="1"/>
</dbReference>
<dbReference type="Pfam" id="PF04617">
    <property type="entry name" value="Hox9_act"/>
    <property type="match status" value="1"/>
</dbReference>
<dbReference type="PIRSF" id="PIRSF037109">
    <property type="entry name" value="Homeobox_Hox9"/>
    <property type="match status" value="1"/>
</dbReference>
<dbReference type="PRINTS" id="PR00024">
    <property type="entry name" value="HOMEOBOX"/>
</dbReference>
<dbReference type="SMART" id="SM00389">
    <property type="entry name" value="HOX"/>
    <property type="match status" value="1"/>
</dbReference>
<dbReference type="SUPFAM" id="SSF46689">
    <property type="entry name" value="Homeodomain-like"/>
    <property type="match status" value="1"/>
</dbReference>
<dbReference type="PROSITE" id="PS00027">
    <property type="entry name" value="HOMEOBOX_1"/>
    <property type="match status" value="1"/>
</dbReference>
<dbReference type="PROSITE" id="PS50071">
    <property type="entry name" value="HOMEOBOX_2"/>
    <property type="match status" value="1"/>
</dbReference>
<name>HXA9A_TAKRU</name>
<sequence length="283" mass="31410">MSTSGTLTSYYVDSLILPENEELSVPRYSAGPGHQHSRQPASIGDPHSELGTCSFPSKPPVFGPSWSHVPAQFPGTVSSVYHHHYGHHQGPVGTETDGRYQSWLLEPMSGSLPMAGLPTTHHYGIKPDGLGVRSGGALPGSHTALLLSDYANGTVATAPPVEKDAVSSHTGDGVDTEEKPGLDPSKSAVYITFYLYRTYSGDRDNPVSNWLHASATRKKRCPYTKHQILELEKEFLFNTYLTRDRRYEVARLLNLTERQVKIWFQNRRMKMKKFNKDGAPKDD</sequence>
<reference key="1">
    <citation type="journal article" date="1997" name="Nat. Genet.">
        <title>Organization of the Fugu rubripes Hox clusters: evidence for continuing evolution of vertebrate Hox complexes.</title>
        <authorList>
            <person name="Aparicio S.J."/>
            <person name="Hawker K."/>
            <person name="Cottage A."/>
            <person name="Mikawa Y."/>
            <person name="Zuo L."/>
            <person name="Venkatesh B."/>
            <person name="Chen E."/>
            <person name="Krumlauf R."/>
            <person name="Brenner S."/>
        </authorList>
    </citation>
    <scope>NUCLEOTIDE SEQUENCE [GENOMIC DNA]</scope>
</reference>
<reference key="2">
    <citation type="journal article" date="2006" name="Proc. Natl. Acad. Sci. U.S.A.">
        <title>Highly conserved syntenic blocks at the vertebrate Hox loci and conserved regulatory elements within and outside Hox gene clusters.</title>
        <authorList>
            <person name="Lee A.P."/>
            <person name="Koh E.G.L."/>
            <person name="Tay A."/>
            <person name="Brenner S."/>
            <person name="Venkatesh B."/>
        </authorList>
    </citation>
    <scope>NUCLEOTIDE SEQUENCE [GENOMIC DNA]</scope>
</reference>
<feature type="chain" id="PRO_0000200086" description="Homeobox protein Hox-A9a">
    <location>
        <begin position="1"/>
        <end position="283"/>
    </location>
</feature>
<feature type="DNA-binding region" description="Homeobox" evidence="2">
    <location>
        <begin position="216"/>
        <end position="275"/>
    </location>
</feature>
<feature type="region of interest" description="Disordered" evidence="3">
    <location>
        <begin position="25"/>
        <end position="54"/>
    </location>
</feature>
<feature type="region of interest" description="Disordered" evidence="3">
    <location>
        <begin position="162"/>
        <end position="181"/>
    </location>
</feature>
<comment type="function">
    <text evidence="1">Sequence-specific transcription factor which is part of a developmental regulatory system that provides cells with specific positional identities on the anterior-posterior axis.</text>
</comment>
<comment type="subcellular location">
    <subcellularLocation>
        <location>Nucleus</location>
    </subcellularLocation>
</comment>
<comment type="similarity">
    <text evidence="4">Belongs to the Abd-B homeobox family.</text>
</comment>
<proteinExistence type="inferred from homology"/>
<accession>O42506</accession>
<accession>Q1KL15</accession>
<keyword id="KW-0217">Developmental protein</keyword>
<keyword id="KW-0238">DNA-binding</keyword>
<keyword id="KW-0371">Homeobox</keyword>
<keyword id="KW-0539">Nucleus</keyword>
<keyword id="KW-1185">Reference proteome</keyword>
<keyword id="KW-0804">Transcription</keyword>
<keyword id="KW-0805">Transcription regulation</keyword>
<organism>
    <name type="scientific">Takifugu rubripes</name>
    <name type="common">Japanese pufferfish</name>
    <name type="synonym">Fugu rubripes</name>
    <dbReference type="NCBI Taxonomy" id="31033"/>
    <lineage>
        <taxon>Eukaryota</taxon>
        <taxon>Metazoa</taxon>
        <taxon>Chordata</taxon>
        <taxon>Craniata</taxon>
        <taxon>Vertebrata</taxon>
        <taxon>Euteleostomi</taxon>
        <taxon>Actinopterygii</taxon>
        <taxon>Neopterygii</taxon>
        <taxon>Teleostei</taxon>
        <taxon>Neoteleostei</taxon>
        <taxon>Acanthomorphata</taxon>
        <taxon>Eupercaria</taxon>
        <taxon>Tetraodontiformes</taxon>
        <taxon>Tetradontoidea</taxon>
        <taxon>Tetraodontidae</taxon>
        <taxon>Takifugu</taxon>
    </lineage>
</organism>